<keyword id="KW-0963">Cytoplasm</keyword>
<keyword id="KW-0378">Hydrolase</keyword>
<keyword id="KW-0694">RNA-binding</keyword>
<keyword id="KW-0820">tRNA-binding</keyword>
<feature type="chain" id="PRO_0000264034" description="Peptidyl-tRNA hydrolase">
    <location>
        <begin position="1"/>
        <end position="193"/>
    </location>
</feature>
<feature type="active site" description="Proton acceptor" evidence="1">
    <location>
        <position position="20"/>
    </location>
</feature>
<feature type="binding site" evidence="1">
    <location>
        <position position="15"/>
    </location>
    <ligand>
        <name>tRNA</name>
        <dbReference type="ChEBI" id="CHEBI:17843"/>
    </ligand>
</feature>
<feature type="binding site" evidence="1">
    <location>
        <position position="65"/>
    </location>
    <ligand>
        <name>tRNA</name>
        <dbReference type="ChEBI" id="CHEBI:17843"/>
    </ligand>
</feature>
<feature type="binding site" evidence="1">
    <location>
        <position position="67"/>
    </location>
    <ligand>
        <name>tRNA</name>
        <dbReference type="ChEBI" id="CHEBI:17843"/>
    </ligand>
</feature>
<feature type="binding site" evidence="1">
    <location>
        <position position="113"/>
    </location>
    <ligand>
        <name>tRNA</name>
        <dbReference type="ChEBI" id="CHEBI:17843"/>
    </ligand>
</feature>
<feature type="site" description="Discriminates between blocked and unblocked aminoacyl-tRNA" evidence="1">
    <location>
        <position position="10"/>
    </location>
</feature>
<feature type="site" description="Stabilizes the basic form of H active site to accept a proton" evidence="1">
    <location>
        <position position="92"/>
    </location>
</feature>
<comment type="function">
    <text evidence="1">Hydrolyzes ribosome-free peptidyl-tRNAs (with 1 or more amino acids incorporated), which drop off the ribosome during protein synthesis, or as a result of ribosome stalling.</text>
</comment>
<comment type="function">
    <text evidence="1">Catalyzes the release of premature peptidyl moieties from peptidyl-tRNA molecules trapped in stalled 50S ribosomal subunits, and thus maintains levels of free tRNAs and 50S ribosomes.</text>
</comment>
<comment type="catalytic activity">
    <reaction evidence="1">
        <text>an N-acyl-L-alpha-aminoacyl-tRNA + H2O = an N-acyl-L-amino acid + a tRNA + H(+)</text>
        <dbReference type="Rhea" id="RHEA:54448"/>
        <dbReference type="Rhea" id="RHEA-COMP:10123"/>
        <dbReference type="Rhea" id="RHEA-COMP:13883"/>
        <dbReference type="ChEBI" id="CHEBI:15377"/>
        <dbReference type="ChEBI" id="CHEBI:15378"/>
        <dbReference type="ChEBI" id="CHEBI:59874"/>
        <dbReference type="ChEBI" id="CHEBI:78442"/>
        <dbReference type="ChEBI" id="CHEBI:138191"/>
        <dbReference type="EC" id="3.1.1.29"/>
    </reaction>
</comment>
<comment type="subunit">
    <text evidence="1">Monomer.</text>
</comment>
<comment type="subcellular location">
    <subcellularLocation>
        <location evidence="1">Cytoplasm</location>
    </subcellularLocation>
</comment>
<comment type="similarity">
    <text evidence="1">Belongs to the PTH family.</text>
</comment>
<evidence type="ECO:0000255" key="1">
    <source>
        <dbReference type="HAMAP-Rule" id="MF_00083"/>
    </source>
</evidence>
<sequence>MFHLLAGLGNPGTQYTLTRHNAGFMVIDAILDKFHFPNFKKKNNALISIGNIESYRVILVKPWTFMNNSGVPIMNIVSLYKIPLDNMIVFHDEVEIDFCTIRVKKSGGNAGHNGLKSIDNFLGKDYWRVRFGIGHPRNKMDLSDYVLSHFHNLNAVNNTISSIVEHITLLLEKNHTTFTDKVRNTLKYEDIPD</sequence>
<organism>
    <name type="scientific">Ehrlichia canis (strain Jake)</name>
    <dbReference type="NCBI Taxonomy" id="269484"/>
    <lineage>
        <taxon>Bacteria</taxon>
        <taxon>Pseudomonadati</taxon>
        <taxon>Pseudomonadota</taxon>
        <taxon>Alphaproteobacteria</taxon>
        <taxon>Rickettsiales</taxon>
        <taxon>Anaplasmataceae</taxon>
        <taxon>Ehrlichia</taxon>
    </lineage>
</organism>
<protein>
    <recommendedName>
        <fullName evidence="1">Peptidyl-tRNA hydrolase</fullName>
        <shortName evidence="1">Pth</shortName>
        <ecNumber evidence="1">3.1.1.29</ecNumber>
    </recommendedName>
</protein>
<gene>
    <name evidence="1" type="primary">pth</name>
    <name type="ordered locus">Ecaj_0091</name>
</gene>
<proteinExistence type="inferred from homology"/>
<name>PTH_EHRCJ</name>
<dbReference type="EC" id="3.1.1.29" evidence="1"/>
<dbReference type="EMBL" id="CP000107">
    <property type="protein sequence ID" value="AAZ68142.1"/>
    <property type="molecule type" value="Genomic_DNA"/>
</dbReference>
<dbReference type="RefSeq" id="WP_011304220.1">
    <property type="nucleotide sequence ID" value="NC_007354.1"/>
</dbReference>
<dbReference type="SMR" id="Q3YT13"/>
<dbReference type="FunCoup" id="Q3YT13">
    <property type="interactions" value="263"/>
</dbReference>
<dbReference type="STRING" id="269484.Ecaj_0091"/>
<dbReference type="KEGG" id="ecn:Ecaj_0091"/>
<dbReference type="eggNOG" id="COG0193">
    <property type="taxonomic scope" value="Bacteria"/>
</dbReference>
<dbReference type="HOGENOM" id="CLU_062456_1_0_5"/>
<dbReference type="InParanoid" id="Q3YT13"/>
<dbReference type="Proteomes" id="UP000000435">
    <property type="component" value="Chromosome"/>
</dbReference>
<dbReference type="GO" id="GO:0005737">
    <property type="term" value="C:cytoplasm"/>
    <property type="evidence" value="ECO:0007669"/>
    <property type="project" value="UniProtKB-SubCell"/>
</dbReference>
<dbReference type="GO" id="GO:0004045">
    <property type="term" value="F:peptidyl-tRNA hydrolase activity"/>
    <property type="evidence" value="ECO:0007669"/>
    <property type="project" value="UniProtKB-UniRule"/>
</dbReference>
<dbReference type="GO" id="GO:0000049">
    <property type="term" value="F:tRNA binding"/>
    <property type="evidence" value="ECO:0007669"/>
    <property type="project" value="UniProtKB-UniRule"/>
</dbReference>
<dbReference type="GO" id="GO:0006515">
    <property type="term" value="P:protein quality control for misfolded or incompletely synthesized proteins"/>
    <property type="evidence" value="ECO:0007669"/>
    <property type="project" value="UniProtKB-UniRule"/>
</dbReference>
<dbReference type="GO" id="GO:0072344">
    <property type="term" value="P:rescue of stalled ribosome"/>
    <property type="evidence" value="ECO:0007669"/>
    <property type="project" value="UniProtKB-UniRule"/>
</dbReference>
<dbReference type="CDD" id="cd00462">
    <property type="entry name" value="PTH"/>
    <property type="match status" value="1"/>
</dbReference>
<dbReference type="FunFam" id="3.40.50.1470:FF:000001">
    <property type="entry name" value="Peptidyl-tRNA hydrolase"/>
    <property type="match status" value="1"/>
</dbReference>
<dbReference type="Gene3D" id="3.40.50.1470">
    <property type="entry name" value="Peptidyl-tRNA hydrolase"/>
    <property type="match status" value="1"/>
</dbReference>
<dbReference type="HAMAP" id="MF_00083">
    <property type="entry name" value="Pept_tRNA_hydro_bact"/>
    <property type="match status" value="1"/>
</dbReference>
<dbReference type="InterPro" id="IPR001328">
    <property type="entry name" value="Pept_tRNA_hydro"/>
</dbReference>
<dbReference type="InterPro" id="IPR018171">
    <property type="entry name" value="Pept_tRNA_hydro_CS"/>
</dbReference>
<dbReference type="InterPro" id="IPR036416">
    <property type="entry name" value="Pept_tRNA_hydro_sf"/>
</dbReference>
<dbReference type="NCBIfam" id="TIGR00447">
    <property type="entry name" value="pth"/>
    <property type="match status" value="1"/>
</dbReference>
<dbReference type="PANTHER" id="PTHR17224">
    <property type="entry name" value="PEPTIDYL-TRNA HYDROLASE"/>
    <property type="match status" value="1"/>
</dbReference>
<dbReference type="PANTHER" id="PTHR17224:SF1">
    <property type="entry name" value="PEPTIDYL-TRNA HYDROLASE"/>
    <property type="match status" value="1"/>
</dbReference>
<dbReference type="Pfam" id="PF01195">
    <property type="entry name" value="Pept_tRNA_hydro"/>
    <property type="match status" value="1"/>
</dbReference>
<dbReference type="SUPFAM" id="SSF53178">
    <property type="entry name" value="Peptidyl-tRNA hydrolase-like"/>
    <property type="match status" value="1"/>
</dbReference>
<dbReference type="PROSITE" id="PS01195">
    <property type="entry name" value="PEPT_TRNA_HYDROL_1"/>
    <property type="match status" value="1"/>
</dbReference>
<dbReference type="PROSITE" id="PS01196">
    <property type="entry name" value="PEPT_TRNA_HYDROL_2"/>
    <property type="match status" value="1"/>
</dbReference>
<accession>Q3YT13</accession>
<reference key="1">
    <citation type="journal article" date="2006" name="J. Bacteriol.">
        <title>The genome of the obligately intracellular bacterium Ehrlichia canis reveals themes of complex membrane structure and immune evasion strategies.</title>
        <authorList>
            <person name="Mavromatis K."/>
            <person name="Doyle C.K."/>
            <person name="Lykidis A."/>
            <person name="Ivanova N."/>
            <person name="Francino M.P."/>
            <person name="Chain P."/>
            <person name="Shin M."/>
            <person name="Malfatti S."/>
            <person name="Larimer F."/>
            <person name="Copeland A."/>
            <person name="Detter J.C."/>
            <person name="Land M."/>
            <person name="Richardson P.M."/>
            <person name="Yu X.J."/>
            <person name="Walker D.H."/>
            <person name="McBride J.W."/>
            <person name="Kyrpides N.C."/>
        </authorList>
    </citation>
    <scope>NUCLEOTIDE SEQUENCE [LARGE SCALE GENOMIC DNA]</scope>
    <source>
        <strain>Jake</strain>
    </source>
</reference>